<protein>
    <recommendedName>
        <fullName>Uncharacterized protein AF_0126</fullName>
    </recommendedName>
</protein>
<dbReference type="EMBL" id="AE000782">
    <property type="protein sequence ID" value="AAB91107.1"/>
    <property type="molecule type" value="Genomic_DNA"/>
</dbReference>
<dbReference type="PIR" id="F69265">
    <property type="entry name" value="F69265"/>
</dbReference>
<dbReference type="PaxDb" id="224325-AF_0126"/>
<dbReference type="EnsemblBacteria" id="AAB91107">
    <property type="protein sequence ID" value="AAB91107"/>
    <property type="gene ID" value="AF_0126"/>
</dbReference>
<dbReference type="KEGG" id="afu:AF_0126"/>
<dbReference type="HOGENOM" id="CLU_3416511_0_0_2"/>
<dbReference type="Proteomes" id="UP000002199">
    <property type="component" value="Chromosome"/>
</dbReference>
<accession>O30111</accession>
<sequence>MRLKELFDAQMEYFGEVFEKTEWPYW</sequence>
<name>Y126_ARCFU</name>
<gene>
    <name type="ordered locus">AF_0126</name>
</gene>
<keyword id="KW-1185">Reference proteome</keyword>
<feature type="chain" id="PRO_0000127834" description="Uncharacterized protein AF_0126">
    <location>
        <begin position="1"/>
        <end position="26"/>
    </location>
</feature>
<proteinExistence type="predicted"/>
<reference key="1">
    <citation type="journal article" date="1997" name="Nature">
        <title>The complete genome sequence of the hyperthermophilic, sulphate-reducing archaeon Archaeoglobus fulgidus.</title>
        <authorList>
            <person name="Klenk H.-P."/>
            <person name="Clayton R.A."/>
            <person name="Tomb J.-F."/>
            <person name="White O."/>
            <person name="Nelson K.E."/>
            <person name="Ketchum K.A."/>
            <person name="Dodson R.J."/>
            <person name="Gwinn M.L."/>
            <person name="Hickey E.K."/>
            <person name="Peterson J.D."/>
            <person name="Richardson D.L."/>
            <person name="Kerlavage A.R."/>
            <person name="Graham D.E."/>
            <person name="Kyrpides N.C."/>
            <person name="Fleischmann R.D."/>
            <person name="Quackenbush J."/>
            <person name="Lee N.H."/>
            <person name="Sutton G.G."/>
            <person name="Gill S.R."/>
            <person name="Kirkness E.F."/>
            <person name="Dougherty B.A."/>
            <person name="McKenney K."/>
            <person name="Adams M.D."/>
            <person name="Loftus B.J."/>
            <person name="Peterson S.N."/>
            <person name="Reich C.I."/>
            <person name="McNeil L.K."/>
            <person name="Badger J.H."/>
            <person name="Glodek A."/>
            <person name="Zhou L."/>
            <person name="Overbeek R."/>
            <person name="Gocayne J.D."/>
            <person name="Weidman J.F."/>
            <person name="McDonald L.A."/>
            <person name="Utterback T.R."/>
            <person name="Cotton M.D."/>
            <person name="Spriggs T."/>
            <person name="Artiach P."/>
            <person name="Kaine B.P."/>
            <person name="Sykes S.M."/>
            <person name="Sadow P.W."/>
            <person name="D'Andrea K.P."/>
            <person name="Bowman C."/>
            <person name="Fujii C."/>
            <person name="Garland S.A."/>
            <person name="Mason T.M."/>
            <person name="Olsen G.J."/>
            <person name="Fraser C.M."/>
            <person name="Smith H.O."/>
            <person name="Woese C.R."/>
            <person name="Venter J.C."/>
        </authorList>
    </citation>
    <scope>NUCLEOTIDE SEQUENCE [LARGE SCALE GENOMIC DNA]</scope>
    <source>
        <strain>ATCC 49558 / DSM 4304 / JCM 9628 / NBRC 100126 / VC-16</strain>
    </source>
</reference>
<organism>
    <name type="scientific">Archaeoglobus fulgidus (strain ATCC 49558 / DSM 4304 / JCM 9628 / NBRC 100126 / VC-16)</name>
    <dbReference type="NCBI Taxonomy" id="224325"/>
    <lineage>
        <taxon>Archaea</taxon>
        <taxon>Methanobacteriati</taxon>
        <taxon>Methanobacteriota</taxon>
        <taxon>Archaeoglobi</taxon>
        <taxon>Archaeoglobales</taxon>
        <taxon>Archaeoglobaceae</taxon>
        <taxon>Archaeoglobus</taxon>
    </lineage>
</organism>